<keyword id="KW-0204">Cytolysis</keyword>
<keyword id="KW-1015">Disulfide bond</keyword>
<keyword id="KW-0354">Hemolysis</keyword>
<keyword id="KW-0732">Signal</keyword>
<keyword id="KW-0800">Toxin</keyword>
<keyword id="KW-0843">Virulence</keyword>
<dbReference type="EMBL" id="M57900">
    <property type="protein sequence ID" value="AAA27570.1"/>
    <property type="molecule type" value="Genomic_DNA"/>
</dbReference>
<dbReference type="PIR" id="A54544">
    <property type="entry name" value="A54544"/>
</dbReference>
<dbReference type="SMR" id="P28031"/>
<dbReference type="STRING" id="673.AL542_11315"/>
<dbReference type="GO" id="GO:0005576">
    <property type="term" value="C:extracellular region"/>
    <property type="evidence" value="ECO:0007669"/>
    <property type="project" value="InterPro"/>
</dbReference>
<dbReference type="GO" id="GO:0090729">
    <property type="term" value="F:toxin activity"/>
    <property type="evidence" value="ECO:0007669"/>
    <property type="project" value="UniProtKB-KW"/>
</dbReference>
<dbReference type="GO" id="GO:0019836">
    <property type="term" value="P:symbiont-mediated hemolysis of host erythrocyte"/>
    <property type="evidence" value="ECO:0007669"/>
    <property type="project" value="InterPro"/>
</dbReference>
<dbReference type="Gene3D" id="2.60.270.30">
    <property type="entry name" value="Vibrio parahaemolyticus thermostable direct hemolysin"/>
    <property type="match status" value="1"/>
</dbReference>
<dbReference type="InterPro" id="IPR038689">
    <property type="entry name" value="TDH_sf"/>
</dbReference>
<dbReference type="InterPro" id="IPR005015">
    <property type="entry name" value="Thermostable_hemolysn_vibrio"/>
</dbReference>
<dbReference type="Pfam" id="PF03347">
    <property type="entry name" value="TDH"/>
    <property type="match status" value="1"/>
</dbReference>
<evidence type="ECO:0000250" key="1"/>
<evidence type="ECO:0000305" key="2"/>
<accession>P28031</accession>
<protein>
    <recommendedName>
        <fullName>Thermostable direct hemolysin</fullName>
    </recommendedName>
</protein>
<sequence length="189" mass="21521">MKYRHLAKKSFLFIFMLAAFKTFAFELPSIPFPSPGSDEILFVVRDTTFNTKEPVNVKVSDFWTNRNVKRKPYKDVHGQSVFITSGTKWLTSYMTVSINNKDYTMAAVSGYKDGFSSVFVKSGQIQLQHYYNSVADFVGGDENSIPSKTYLDETPEYFVNVEAYESGSGNILVMCISNKESYFECESQQ</sequence>
<feature type="signal peptide" evidence="1">
    <location>
        <begin position="1"/>
        <end position="24"/>
    </location>
</feature>
<feature type="chain" id="PRO_0000013360" description="Thermostable direct hemolysin">
    <location>
        <begin position="25"/>
        <end position="189"/>
    </location>
</feature>
<feature type="disulfide bond" evidence="1">
    <location>
        <begin position="175"/>
        <end position="185"/>
    </location>
</feature>
<reference key="1">
    <citation type="journal article" date="1991" name="FEMS Microbiol. Lett.">
        <title>Analysis of the gene of Vibrio hollisae encoding the hemolysin similar to the thermostable direct hemolysin of Vibrio parahaemolyticus.</title>
        <authorList>
            <person name="Yamasaki S."/>
            <person name="Shirai H."/>
            <person name="Takeda Y."/>
            <person name="Nishibuchi M."/>
        </authorList>
    </citation>
    <scope>NUCLEOTIDE SEQUENCE [GENOMIC DNA]</scope>
    <source>
        <strain>9041</strain>
    </source>
</reference>
<organism>
    <name type="scientific">Grimontia hollisae</name>
    <name type="common">Vibrio hollisae</name>
    <dbReference type="NCBI Taxonomy" id="673"/>
    <lineage>
        <taxon>Bacteria</taxon>
        <taxon>Pseudomonadati</taxon>
        <taxon>Pseudomonadota</taxon>
        <taxon>Gammaproteobacteria</taxon>
        <taxon>Vibrionales</taxon>
        <taxon>Vibrionaceae</taxon>
        <taxon>Grimontia</taxon>
    </lineage>
</organism>
<name>HLY1_GRIHO</name>
<comment type="function">
    <text>Bacterial hemolysins are exotoxins that attack blood cell membranes and cause cell rupture by mechanisms not clearly defined.</text>
</comment>
<comment type="subunit">
    <text>Homodimer.</text>
</comment>
<comment type="similarity">
    <text evidence="2">Belongs to the TDH hemolysin family.</text>
</comment>
<proteinExistence type="inferred from homology"/>
<gene>
    <name type="primary">tdh</name>
</gene>